<dbReference type="EMBL" id="AP006878">
    <property type="protein sequence ID" value="BAD85825.1"/>
    <property type="molecule type" value="Genomic_DNA"/>
</dbReference>
<dbReference type="RefSeq" id="WP_011250587.1">
    <property type="nucleotide sequence ID" value="NC_006624.1"/>
</dbReference>
<dbReference type="PDB" id="6SKG">
    <property type="method" value="EM"/>
    <property type="resolution" value="2.65 A"/>
    <property type="chains" value="Bp=1-236"/>
</dbReference>
<dbReference type="PDBsum" id="6SKG"/>
<dbReference type="EMDB" id="EMD-10224"/>
<dbReference type="SMR" id="Q5JIV0"/>
<dbReference type="FunCoup" id="Q5JIV0">
    <property type="interactions" value="127"/>
</dbReference>
<dbReference type="IntAct" id="Q5JIV0">
    <property type="interactions" value="1"/>
</dbReference>
<dbReference type="MINT" id="Q5JIV0"/>
<dbReference type="STRING" id="69014.TK1636"/>
<dbReference type="EnsemblBacteria" id="BAD85825">
    <property type="protein sequence ID" value="BAD85825"/>
    <property type="gene ID" value="TK1636"/>
</dbReference>
<dbReference type="GeneID" id="78448164"/>
<dbReference type="KEGG" id="tko:TK1636"/>
<dbReference type="PATRIC" id="fig|69014.16.peg.1595"/>
<dbReference type="eggNOG" id="arCOG04187">
    <property type="taxonomic scope" value="Archaea"/>
</dbReference>
<dbReference type="HOGENOM" id="CLU_043216_2_0_2"/>
<dbReference type="InParanoid" id="Q5JIV0"/>
<dbReference type="OrthoDB" id="84504at2157"/>
<dbReference type="PhylomeDB" id="Q5JIV0"/>
<dbReference type="Proteomes" id="UP000000536">
    <property type="component" value="Chromosome"/>
</dbReference>
<dbReference type="GO" id="GO:0042256">
    <property type="term" value="P:cytosolic ribosome assembly"/>
    <property type="evidence" value="ECO:0007669"/>
    <property type="project" value="InterPro"/>
</dbReference>
<dbReference type="Gene3D" id="3.30.70.240">
    <property type="match status" value="1"/>
</dbReference>
<dbReference type="Gene3D" id="3.30.1250.10">
    <property type="entry name" value="Ribosome maturation protein SBDS, N-terminal domain"/>
    <property type="match status" value="1"/>
</dbReference>
<dbReference type="Gene3D" id="1.10.10.900">
    <property type="entry name" value="SBDS protein C-terminal domain, subdomain 1"/>
    <property type="match status" value="1"/>
</dbReference>
<dbReference type="InterPro" id="IPR035647">
    <property type="entry name" value="EFG_III/V"/>
</dbReference>
<dbReference type="InterPro" id="IPR018023">
    <property type="entry name" value="Ribosome_mat_SBDS_CS"/>
</dbReference>
<dbReference type="InterPro" id="IPR036786">
    <property type="entry name" value="Ribosome_mat_SBDS_N_sf"/>
</dbReference>
<dbReference type="InterPro" id="IPR002140">
    <property type="entry name" value="Sdo1/SBDS"/>
</dbReference>
<dbReference type="InterPro" id="IPR039100">
    <property type="entry name" value="Sdo1/SBDS-like"/>
</dbReference>
<dbReference type="InterPro" id="IPR046928">
    <property type="entry name" value="SDO1/SBDS_C"/>
</dbReference>
<dbReference type="InterPro" id="IPR018978">
    <property type="entry name" value="SDO1/SBDS_central"/>
</dbReference>
<dbReference type="InterPro" id="IPR037188">
    <property type="entry name" value="Sdo1/SBDS_central_sf"/>
</dbReference>
<dbReference type="InterPro" id="IPR019783">
    <property type="entry name" value="SDO1/SBDS_N"/>
</dbReference>
<dbReference type="NCBIfam" id="TIGR00291">
    <property type="entry name" value="RNA_SBDS"/>
    <property type="match status" value="1"/>
</dbReference>
<dbReference type="PANTHER" id="PTHR10927">
    <property type="entry name" value="RIBOSOME MATURATION PROTEIN SBDS"/>
    <property type="match status" value="1"/>
</dbReference>
<dbReference type="PANTHER" id="PTHR10927:SF4">
    <property type="entry name" value="RIBOSOME MATURATION PROTEIN SDO1 HOMOLOG"/>
    <property type="match status" value="1"/>
</dbReference>
<dbReference type="Pfam" id="PF20268">
    <property type="entry name" value="SBDS_C"/>
    <property type="match status" value="1"/>
</dbReference>
<dbReference type="Pfam" id="PF09377">
    <property type="entry name" value="SBDS_domain_II"/>
    <property type="match status" value="1"/>
</dbReference>
<dbReference type="Pfam" id="PF01172">
    <property type="entry name" value="SBDS_N"/>
    <property type="match status" value="1"/>
</dbReference>
<dbReference type="SUPFAM" id="SSF54980">
    <property type="entry name" value="EF-G C-terminal domain-like"/>
    <property type="match status" value="1"/>
</dbReference>
<dbReference type="SUPFAM" id="SSF89895">
    <property type="entry name" value="FYSH domain"/>
    <property type="match status" value="1"/>
</dbReference>
<dbReference type="SUPFAM" id="SSF109728">
    <property type="entry name" value="Hypothetical protein AF0491, middle domain"/>
    <property type="match status" value="1"/>
</dbReference>
<dbReference type="PROSITE" id="PS01267">
    <property type="entry name" value="UPF0023"/>
    <property type="match status" value="1"/>
</dbReference>
<organism>
    <name type="scientific">Thermococcus kodakarensis (strain ATCC BAA-918 / JCM 12380 / KOD1)</name>
    <name type="common">Pyrococcus kodakaraensis (strain KOD1)</name>
    <dbReference type="NCBI Taxonomy" id="69014"/>
    <lineage>
        <taxon>Archaea</taxon>
        <taxon>Methanobacteriati</taxon>
        <taxon>Methanobacteriota</taxon>
        <taxon>Thermococci</taxon>
        <taxon>Thermococcales</taxon>
        <taxon>Thermococcaceae</taxon>
        <taxon>Thermococcus</taxon>
    </lineage>
</organism>
<comment type="subunit">
    <text evidence="2">Crystallized in association with 70S ribosomes.</text>
</comment>
<comment type="similarity">
    <text evidence="3">Belongs to the SDO1/SBDS family.</text>
</comment>
<evidence type="ECO:0000250" key="1">
    <source>
        <dbReference type="UniProtKB" id="O29759"/>
    </source>
</evidence>
<evidence type="ECO:0000269" key="2">
    <source>
    </source>
</evidence>
<evidence type="ECO:0000305" key="3"/>
<evidence type="ECO:0000312" key="4">
    <source>
        <dbReference type="EMBL" id="BAD85825.1"/>
    </source>
</evidence>
<evidence type="ECO:0007744" key="5">
    <source>
        <dbReference type="PDB" id="6SKG"/>
    </source>
</evidence>
<keyword id="KW-0002">3D-structure</keyword>
<keyword id="KW-1185">Reference proteome</keyword>
<sequence>MPISVDKAVIARLKTHGETFEILVDPYLARDFKEGKDVPIEEILATPYVFKDAHKGDKASEHEMEKIFGTSDPYEVAKIILRKGEVQLTAEQRRQMLEDKKRYIATVIHRHAVDPRTGYPHPVDRILRAMEEAGVHIDIFKDAEAQVPQVIKAIRPILPLKLEVKVIAVKIPGDYVGRAYGEVRKFGNIKREEWGSDGSWMFVIEIPGGVEEEFYEKLNALTKGEAITKLLERKGL</sequence>
<reference evidence="4" key="1">
    <citation type="journal article" date="2005" name="Genome Res.">
        <title>Complete genome sequence of the hyperthermophilic archaeon Thermococcus kodakaraensis KOD1 and comparison with Pyrococcus genomes.</title>
        <authorList>
            <person name="Fukui T."/>
            <person name="Atomi H."/>
            <person name="Kanai T."/>
            <person name="Matsumi R."/>
            <person name="Fujiwara S."/>
            <person name="Imanaka T."/>
        </authorList>
    </citation>
    <scope>NUCLEOTIDE SEQUENCE [LARGE SCALE GENOMIC DNA]</scope>
    <source>
        <strain>ATCC BAA-918 / JCM 12380 / KOD1</strain>
    </source>
</reference>
<reference evidence="5" key="2">
    <citation type="journal article" date="2020" name="Nature">
        <title>Dynamic RNA acetylation revealed by quantitative cross-evolutionary mapping.</title>
        <authorList>
            <person name="Sas-Chen A."/>
            <person name="Thomas J.M."/>
            <person name="Matzov D."/>
            <person name="Taoka M."/>
            <person name="Nance K.D."/>
            <person name="Nir R."/>
            <person name="Bryson K.M."/>
            <person name="Shachar R."/>
            <person name="Liman G.L.S."/>
            <person name="Burkhart B.W."/>
            <person name="Gamage S.T."/>
            <person name="Nobe Y."/>
            <person name="Briney C.A."/>
            <person name="Levy M.J."/>
            <person name="Fuchs R.T."/>
            <person name="Robb G.B."/>
            <person name="Hartmann J."/>
            <person name="Sharma S."/>
            <person name="Lin Q."/>
            <person name="Florens L."/>
            <person name="Washburn M.P."/>
            <person name="Isobe T."/>
            <person name="Santangelo T.J."/>
            <person name="Shalev-Benami M."/>
            <person name="Meier J.L."/>
            <person name="Schwartz S."/>
        </authorList>
    </citation>
    <scope>STRUCTURE BY ELECTRON MICROSCOPY (2.65 ANGSTROMS)</scope>
    <scope>SUBUNIT</scope>
    <source>
        <strain>ATCC BAA-918 / TS559</strain>
    </source>
</reference>
<proteinExistence type="evidence at protein level"/>
<protein>
    <recommendedName>
        <fullName evidence="1">Ribosome maturation protein SDO1 homolog</fullName>
    </recommendedName>
</protein>
<accession>Q5JIV0</accession>
<gene>
    <name evidence="4" type="ordered locus">TK1636</name>
</gene>
<name>SDO1_THEKO</name>
<feature type="chain" id="PRO_0000461767" description="Ribosome maturation protein SDO1 homolog">
    <location>
        <begin position="1"/>
        <end position="236"/>
    </location>
</feature>